<evidence type="ECO:0000255" key="1">
    <source>
        <dbReference type="HAMAP-Rule" id="MF_00480"/>
    </source>
</evidence>
<evidence type="ECO:0000305" key="2"/>
<keyword id="KW-0687">Ribonucleoprotein</keyword>
<keyword id="KW-0689">Ribosomal protein</keyword>
<keyword id="KW-0694">RNA-binding</keyword>
<keyword id="KW-0699">rRNA-binding</keyword>
<keyword id="KW-0820">tRNA-binding</keyword>
<name>RS7_BACAC</name>
<sequence length="156" mass="17884">MPRKGPVAKRDVLPDPMYNSKLVTRLINKMMVDGKKGKSQTILYNAFDIVSERTGKEPMEVFEQALKNIMPVLEVRARRVGGANYQVPVEVRPERRTTLGLRWLVNYARLRGEKTMEERLANEILDAANNAGASVKKREDTHKMAEANKAFAHYRW</sequence>
<feature type="chain" id="PRO_1000135578" description="Small ribosomal subunit protein uS7">
    <location>
        <begin position="1"/>
        <end position="156"/>
    </location>
</feature>
<reference key="1">
    <citation type="submission" date="2008-10" db="EMBL/GenBank/DDBJ databases">
        <title>Genome sequence of Bacillus anthracis str. CDC 684.</title>
        <authorList>
            <person name="Dodson R.J."/>
            <person name="Munk A.C."/>
            <person name="Brettin T."/>
            <person name="Bruce D."/>
            <person name="Detter C."/>
            <person name="Tapia R."/>
            <person name="Han C."/>
            <person name="Sutton G."/>
            <person name="Sims D."/>
        </authorList>
    </citation>
    <scope>NUCLEOTIDE SEQUENCE [LARGE SCALE GENOMIC DNA]</scope>
    <source>
        <strain>CDC 684 / NRRL 3495</strain>
    </source>
</reference>
<accession>C3LJ78</accession>
<gene>
    <name evidence="1" type="primary">rpsG</name>
    <name type="ordered locus">BAMEG_0122</name>
</gene>
<organism>
    <name type="scientific">Bacillus anthracis (strain CDC 684 / NRRL 3495)</name>
    <dbReference type="NCBI Taxonomy" id="568206"/>
    <lineage>
        <taxon>Bacteria</taxon>
        <taxon>Bacillati</taxon>
        <taxon>Bacillota</taxon>
        <taxon>Bacilli</taxon>
        <taxon>Bacillales</taxon>
        <taxon>Bacillaceae</taxon>
        <taxon>Bacillus</taxon>
        <taxon>Bacillus cereus group</taxon>
    </lineage>
</organism>
<comment type="function">
    <text evidence="1">One of the primary rRNA binding proteins, it binds directly to 16S rRNA where it nucleates assembly of the head domain of the 30S subunit. Is located at the subunit interface close to the decoding center, probably blocks exit of the E-site tRNA.</text>
</comment>
<comment type="subunit">
    <text evidence="1">Part of the 30S ribosomal subunit. Contacts proteins S9 and S11.</text>
</comment>
<comment type="similarity">
    <text evidence="1">Belongs to the universal ribosomal protein uS7 family.</text>
</comment>
<dbReference type="EMBL" id="CP001215">
    <property type="protein sequence ID" value="ACP13550.1"/>
    <property type="molecule type" value="Genomic_DNA"/>
</dbReference>
<dbReference type="RefSeq" id="WP_001137493.1">
    <property type="nucleotide sequence ID" value="NC_012581.1"/>
</dbReference>
<dbReference type="SMR" id="C3LJ78"/>
<dbReference type="GeneID" id="93010947"/>
<dbReference type="KEGG" id="bah:BAMEG_0122"/>
<dbReference type="HOGENOM" id="CLU_072226_1_1_9"/>
<dbReference type="GO" id="GO:0015935">
    <property type="term" value="C:small ribosomal subunit"/>
    <property type="evidence" value="ECO:0007669"/>
    <property type="project" value="InterPro"/>
</dbReference>
<dbReference type="GO" id="GO:0019843">
    <property type="term" value="F:rRNA binding"/>
    <property type="evidence" value="ECO:0007669"/>
    <property type="project" value="UniProtKB-UniRule"/>
</dbReference>
<dbReference type="GO" id="GO:0003735">
    <property type="term" value="F:structural constituent of ribosome"/>
    <property type="evidence" value="ECO:0007669"/>
    <property type="project" value="InterPro"/>
</dbReference>
<dbReference type="GO" id="GO:0000049">
    <property type="term" value="F:tRNA binding"/>
    <property type="evidence" value="ECO:0007669"/>
    <property type="project" value="UniProtKB-UniRule"/>
</dbReference>
<dbReference type="GO" id="GO:0006412">
    <property type="term" value="P:translation"/>
    <property type="evidence" value="ECO:0007669"/>
    <property type="project" value="UniProtKB-UniRule"/>
</dbReference>
<dbReference type="CDD" id="cd14869">
    <property type="entry name" value="uS7_Bacteria"/>
    <property type="match status" value="1"/>
</dbReference>
<dbReference type="FunFam" id="1.10.455.10:FF:000001">
    <property type="entry name" value="30S ribosomal protein S7"/>
    <property type="match status" value="1"/>
</dbReference>
<dbReference type="Gene3D" id="1.10.455.10">
    <property type="entry name" value="Ribosomal protein S7 domain"/>
    <property type="match status" value="1"/>
</dbReference>
<dbReference type="HAMAP" id="MF_00480_B">
    <property type="entry name" value="Ribosomal_uS7_B"/>
    <property type="match status" value="1"/>
</dbReference>
<dbReference type="InterPro" id="IPR000235">
    <property type="entry name" value="Ribosomal_uS7"/>
</dbReference>
<dbReference type="InterPro" id="IPR005717">
    <property type="entry name" value="Ribosomal_uS7_bac/org-type"/>
</dbReference>
<dbReference type="InterPro" id="IPR020606">
    <property type="entry name" value="Ribosomal_uS7_CS"/>
</dbReference>
<dbReference type="InterPro" id="IPR023798">
    <property type="entry name" value="Ribosomal_uS7_dom"/>
</dbReference>
<dbReference type="InterPro" id="IPR036823">
    <property type="entry name" value="Ribosomal_uS7_dom_sf"/>
</dbReference>
<dbReference type="NCBIfam" id="TIGR01029">
    <property type="entry name" value="rpsG_bact"/>
    <property type="match status" value="1"/>
</dbReference>
<dbReference type="PANTHER" id="PTHR11205">
    <property type="entry name" value="RIBOSOMAL PROTEIN S7"/>
    <property type="match status" value="1"/>
</dbReference>
<dbReference type="Pfam" id="PF00177">
    <property type="entry name" value="Ribosomal_S7"/>
    <property type="match status" value="1"/>
</dbReference>
<dbReference type="PIRSF" id="PIRSF002122">
    <property type="entry name" value="RPS7p_RPS7a_RPS5e_RPS7o"/>
    <property type="match status" value="1"/>
</dbReference>
<dbReference type="SUPFAM" id="SSF47973">
    <property type="entry name" value="Ribosomal protein S7"/>
    <property type="match status" value="1"/>
</dbReference>
<dbReference type="PROSITE" id="PS00052">
    <property type="entry name" value="RIBOSOMAL_S7"/>
    <property type="match status" value="1"/>
</dbReference>
<proteinExistence type="inferred from homology"/>
<protein>
    <recommendedName>
        <fullName evidence="1">Small ribosomal subunit protein uS7</fullName>
    </recommendedName>
    <alternativeName>
        <fullName evidence="2">30S ribosomal protein S7</fullName>
    </alternativeName>
</protein>